<gene>
    <name type="primary">pdx1</name>
    <name type="synonym">lhbox8</name>
</gene>
<reference key="1">
    <citation type="submission" date="1994-08" db="EMBL/GenBank/DDBJ databases">
        <authorList>
            <person name="Gama L."/>
        </authorList>
    </citation>
    <scope>NUCLEOTIDE SEQUENCE [GENOMIC DNA]</scope>
</reference>
<reference key="2">
    <citation type="journal article" date="1989" name="Development">
        <title>XlHbox 8: a novel Xenopus homeo protein restricted to a narrow band of endoderm.</title>
        <authorList>
            <person name="Wright C.V.E."/>
            <person name="Schnegelsberg P."/>
            <person name="De Robertis E.M."/>
        </authorList>
    </citation>
    <scope>NUCLEOTIDE SEQUENCE [GENOMIC DNA] OF 165-271</scope>
    <scope>SUBCELLULAR LOCATION</scope>
    <scope>TISSUE SPECIFICITY</scope>
</reference>
<reference key="3">
    <citation type="journal article" date="2006" name="Genes Dev.">
        <title>Combined ectopic expression of Pdx1 and Ptf1a/p48 results in the stable conversion of posterior endoderm into endocrine and exocrine pancreatic tissue.</title>
        <authorList>
            <person name="Afelik S."/>
            <person name="Chen Y."/>
            <person name="Pieler T."/>
        </authorList>
    </citation>
    <scope>FUNCTION</scope>
    <scope>TISSUE SPECIFICITY</scope>
</reference>
<protein>
    <recommendedName>
        <fullName>Pancreas/duodenum homeobox protein 1</fullName>
        <shortName>PDX-1</shortName>
    </recommendedName>
    <alternativeName>
        <fullName>Homeobox protein 8</fullName>
        <shortName>XlHbox-8</shortName>
    </alternativeName>
</protein>
<keyword id="KW-0217">Developmental protein</keyword>
<keyword id="KW-0238">DNA-binding</keyword>
<keyword id="KW-0371">Homeobox</keyword>
<keyword id="KW-0539">Nucleus</keyword>
<keyword id="KW-1185">Reference proteome</keyword>
<organism>
    <name type="scientific">Xenopus laevis</name>
    <name type="common">African clawed frog</name>
    <dbReference type="NCBI Taxonomy" id="8355"/>
    <lineage>
        <taxon>Eukaryota</taxon>
        <taxon>Metazoa</taxon>
        <taxon>Chordata</taxon>
        <taxon>Craniata</taxon>
        <taxon>Vertebrata</taxon>
        <taxon>Euteleostomi</taxon>
        <taxon>Amphibia</taxon>
        <taxon>Batrachia</taxon>
        <taxon>Anura</taxon>
        <taxon>Pipoidea</taxon>
        <taxon>Pipidae</taxon>
        <taxon>Xenopodinae</taxon>
        <taxon>Xenopus</taxon>
        <taxon>Xenopus</taxon>
    </lineage>
</organism>
<evidence type="ECO:0000255" key="1">
    <source>
        <dbReference type="PROSITE-ProRule" id="PRU00108"/>
    </source>
</evidence>
<evidence type="ECO:0000256" key="2">
    <source>
        <dbReference type="SAM" id="MobiDB-lite"/>
    </source>
</evidence>
<evidence type="ECO:0000269" key="3">
    <source>
    </source>
</evidence>
<evidence type="ECO:0000269" key="4">
    <source>
    </source>
</evidence>
<evidence type="ECO:0000305" key="5"/>
<dbReference type="EMBL" id="X16849">
    <property type="protein sequence ID" value="CAA34746.1"/>
    <property type="molecule type" value="Genomic_DNA"/>
</dbReference>
<dbReference type="PIR" id="S07818">
    <property type="entry name" value="S07818"/>
</dbReference>
<dbReference type="RefSeq" id="NP_001165682.1">
    <property type="nucleotide sequence ID" value="NM_001172211.1"/>
</dbReference>
<dbReference type="BMRB" id="P14837"/>
<dbReference type="SMR" id="P14837"/>
<dbReference type="GeneID" id="100337610"/>
<dbReference type="KEGG" id="xla:100337610"/>
<dbReference type="AGR" id="Xenbase:XB-GENE-6464311"/>
<dbReference type="CTD" id="100337610"/>
<dbReference type="Xenbase" id="XB-GENE-6464311">
    <property type="gene designation" value="pdx1.S"/>
</dbReference>
<dbReference type="OrthoDB" id="6159439at2759"/>
<dbReference type="Proteomes" id="UP000186698">
    <property type="component" value="Chromosome 2S"/>
</dbReference>
<dbReference type="Bgee" id="100337610">
    <property type="expression patterns" value="Expressed in pancreas and 3 other cell types or tissues"/>
</dbReference>
<dbReference type="GO" id="GO:0005634">
    <property type="term" value="C:nucleus"/>
    <property type="evidence" value="ECO:0000318"/>
    <property type="project" value="GO_Central"/>
</dbReference>
<dbReference type="GO" id="GO:0000981">
    <property type="term" value="F:DNA-binding transcription factor activity, RNA polymerase II-specific"/>
    <property type="evidence" value="ECO:0000318"/>
    <property type="project" value="GO_Central"/>
</dbReference>
<dbReference type="GO" id="GO:0000978">
    <property type="term" value="F:RNA polymerase II cis-regulatory region sequence-specific DNA binding"/>
    <property type="evidence" value="ECO:0000318"/>
    <property type="project" value="GO_Central"/>
</dbReference>
<dbReference type="GO" id="GO:0045944">
    <property type="term" value="P:positive regulation of transcription by RNA polymerase II"/>
    <property type="evidence" value="ECO:0007669"/>
    <property type="project" value="UniProtKB-ARBA"/>
</dbReference>
<dbReference type="GO" id="GO:0006357">
    <property type="term" value="P:regulation of transcription by RNA polymerase II"/>
    <property type="evidence" value="ECO:0000318"/>
    <property type="project" value="GO_Central"/>
</dbReference>
<dbReference type="GO" id="GO:0003309">
    <property type="term" value="P:type B pancreatic cell differentiation"/>
    <property type="evidence" value="ECO:0000318"/>
    <property type="project" value="GO_Central"/>
</dbReference>
<dbReference type="CDD" id="cd00086">
    <property type="entry name" value="homeodomain"/>
    <property type="match status" value="1"/>
</dbReference>
<dbReference type="FunFam" id="1.10.10.60:FF:000176">
    <property type="entry name" value="pancreas/duodenum homeobox protein 1"/>
    <property type="match status" value="1"/>
</dbReference>
<dbReference type="Gene3D" id="1.10.10.60">
    <property type="entry name" value="Homeodomain-like"/>
    <property type="match status" value="1"/>
</dbReference>
<dbReference type="InterPro" id="IPR001356">
    <property type="entry name" value="HD"/>
</dbReference>
<dbReference type="InterPro" id="IPR020479">
    <property type="entry name" value="HD_metazoa"/>
</dbReference>
<dbReference type="InterPro" id="IPR017995">
    <property type="entry name" value="Homeobox_antennapedia"/>
</dbReference>
<dbReference type="InterPro" id="IPR017970">
    <property type="entry name" value="Homeobox_CS"/>
</dbReference>
<dbReference type="InterPro" id="IPR009057">
    <property type="entry name" value="Homeodomain-like_sf"/>
</dbReference>
<dbReference type="PANTHER" id="PTHR45664:SF12">
    <property type="entry name" value="PANCREAS_DUODENUM HOMEOBOX PROTEIN 1"/>
    <property type="match status" value="1"/>
</dbReference>
<dbReference type="PANTHER" id="PTHR45664">
    <property type="entry name" value="PROTEIN ZERKNUELLT 1-RELATED"/>
    <property type="match status" value="1"/>
</dbReference>
<dbReference type="Pfam" id="PF00046">
    <property type="entry name" value="Homeodomain"/>
    <property type="match status" value="1"/>
</dbReference>
<dbReference type="PRINTS" id="PR00025">
    <property type="entry name" value="ANTENNAPEDIA"/>
</dbReference>
<dbReference type="PRINTS" id="PR00024">
    <property type="entry name" value="HOMEOBOX"/>
</dbReference>
<dbReference type="SMART" id="SM00389">
    <property type="entry name" value="HOX"/>
    <property type="match status" value="1"/>
</dbReference>
<dbReference type="SUPFAM" id="SSF46689">
    <property type="entry name" value="Homeodomain-like"/>
    <property type="match status" value="1"/>
</dbReference>
<dbReference type="PROSITE" id="PS00027">
    <property type="entry name" value="HOMEOBOX_1"/>
    <property type="match status" value="1"/>
</dbReference>
<dbReference type="PROSITE" id="PS50071">
    <property type="entry name" value="HOMEOBOX_2"/>
    <property type="match status" value="1"/>
</dbReference>
<proteinExistence type="evidence at transcript level"/>
<sequence length="271" mass="31406">MNADDQYYPQAPIYKEPCAFQRSQGQDYNPSPPACLYMGRQQQAAYSNPLVALDPGSPPDISPYEVPPISEEPIVPHLHHHHYHHHHHHPGIPHPHHQMPFPDDNESGTLEERNRTLLPFPWMKSTKSHTWKGQWTDGSYIMEQEENKRTRTAYTRAQLLELEKEFLFNKYISRPRRVELAVMLNLTERHIKIWFQNRRMKWKKEEDKKRGRGSDPEQDSVVSSADVLKDEPQCLGNSQKTGDLVLSSPLPTSSQPNQVPSIGSLRQAEKR</sequence>
<comment type="function">
    <text evidence="3">Acts together with ptf1a to induce the pancreatic lineage within the endoderm.</text>
</comment>
<comment type="subcellular location">
    <subcellularLocation>
        <location evidence="1 4">Nucleus</location>
    </subcellularLocation>
</comment>
<comment type="tissue specificity">
    <text evidence="3 4">In embryos, expressed in the anteroposterior band of the endoderm, with expression continuing in cells of the pancreatic anlagen and duodenum.</text>
</comment>
<comment type="similarity">
    <text evidence="5">Belongs to the Antp homeobox family. IPF1/XlHbox-8 subfamily.</text>
</comment>
<name>PDX1_XENLA</name>
<feature type="chain" id="PRO_0000049006" description="Pancreas/duodenum homeobox protein 1">
    <location>
        <begin position="1"/>
        <end position="271"/>
    </location>
</feature>
<feature type="DNA-binding region" description="Homeobox" evidence="1">
    <location>
        <begin position="147"/>
        <end position="206"/>
    </location>
</feature>
<feature type="region of interest" description="Disordered" evidence="2">
    <location>
        <begin position="204"/>
        <end position="271"/>
    </location>
</feature>
<feature type="short sequence motif" description="Antp-type hexapeptide">
    <location>
        <begin position="119"/>
        <end position="124"/>
    </location>
</feature>
<feature type="compositionally biased region" description="Basic and acidic residues" evidence="2">
    <location>
        <begin position="204"/>
        <end position="215"/>
    </location>
</feature>
<feature type="compositionally biased region" description="Polar residues" evidence="2">
    <location>
        <begin position="249"/>
        <end position="261"/>
    </location>
</feature>
<feature type="sequence conflict" description="In Ref. 2." evidence="5" ref="2">
    <original>P</original>
    <variation>S</variation>
    <location>
        <position position="256"/>
    </location>
</feature>
<accession>P14837</accession>